<comment type="function">
    <text evidence="1">Catalyzes the phosphorylation of the hydroxyl group of 4-methyl-5-beta-hydroxyethylthiazole (THZ).</text>
</comment>
<comment type="catalytic activity">
    <reaction evidence="1">
        <text>5-(2-hydroxyethyl)-4-methylthiazole + ATP = 4-methyl-5-(2-phosphooxyethyl)-thiazole + ADP + H(+)</text>
        <dbReference type="Rhea" id="RHEA:24212"/>
        <dbReference type="ChEBI" id="CHEBI:15378"/>
        <dbReference type="ChEBI" id="CHEBI:17957"/>
        <dbReference type="ChEBI" id="CHEBI:30616"/>
        <dbReference type="ChEBI" id="CHEBI:58296"/>
        <dbReference type="ChEBI" id="CHEBI:456216"/>
        <dbReference type="EC" id="2.7.1.50"/>
    </reaction>
</comment>
<comment type="cofactor">
    <cofactor evidence="1">
        <name>Mg(2+)</name>
        <dbReference type="ChEBI" id="CHEBI:18420"/>
    </cofactor>
</comment>
<comment type="pathway">
    <text evidence="1">Cofactor biosynthesis; thiamine diphosphate biosynthesis; 4-methyl-5-(2-phosphoethyl)-thiazole from 5-(2-hydroxyethyl)-4-methylthiazole: step 1/1.</text>
</comment>
<comment type="similarity">
    <text evidence="1">Belongs to the Thz kinase family.</text>
</comment>
<evidence type="ECO:0000255" key="1">
    <source>
        <dbReference type="HAMAP-Rule" id="MF_00228"/>
    </source>
</evidence>
<protein>
    <recommendedName>
        <fullName evidence="1">Hydroxyethylthiazole kinase</fullName>
        <ecNumber evidence="1">2.7.1.50</ecNumber>
    </recommendedName>
    <alternativeName>
        <fullName evidence="1">4-methyl-5-beta-hydroxyethylthiazole kinase</fullName>
        <shortName evidence="1">TH kinase</shortName>
        <shortName evidence="1">Thz kinase</shortName>
    </alternativeName>
</protein>
<proteinExistence type="inferred from homology"/>
<keyword id="KW-0067">ATP-binding</keyword>
<keyword id="KW-0418">Kinase</keyword>
<keyword id="KW-0460">Magnesium</keyword>
<keyword id="KW-0479">Metal-binding</keyword>
<keyword id="KW-0547">Nucleotide-binding</keyword>
<keyword id="KW-1185">Reference proteome</keyword>
<keyword id="KW-0784">Thiamine biosynthesis</keyword>
<keyword id="KW-0808">Transferase</keyword>
<gene>
    <name evidence="1" type="primary">thiM</name>
    <name type="ordered locus">CA_C3096</name>
</gene>
<dbReference type="EC" id="2.7.1.50" evidence="1"/>
<dbReference type="EMBL" id="AE001437">
    <property type="protein sequence ID" value="AAK81036.1"/>
    <property type="molecule type" value="Genomic_DNA"/>
</dbReference>
<dbReference type="PIR" id="A97281">
    <property type="entry name" value="A97281"/>
</dbReference>
<dbReference type="RefSeq" id="NP_349696.1">
    <property type="nucleotide sequence ID" value="NC_003030.1"/>
</dbReference>
<dbReference type="RefSeq" id="WP_010966377.1">
    <property type="nucleotide sequence ID" value="NC_003030.1"/>
</dbReference>
<dbReference type="SMR" id="Q97EL4"/>
<dbReference type="STRING" id="272562.CA_C3096"/>
<dbReference type="GeneID" id="44999583"/>
<dbReference type="KEGG" id="cac:CA_C3096"/>
<dbReference type="PATRIC" id="fig|272562.8.peg.3279"/>
<dbReference type="eggNOG" id="COG2145">
    <property type="taxonomic scope" value="Bacteria"/>
</dbReference>
<dbReference type="HOGENOM" id="CLU_019943_0_0_9"/>
<dbReference type="OrthoDB" id="9778146at2"/>
<dbReference type="UniPathway" id="UPA00060">
    <property type="reaction ID" value="UER00139"/>
</dbReference>
<dbReference type="Proteomes" id="UP000000814">
    <property type="component" value="Chromosome"/>
</dbReference>
<dbReference type="GO" id="GO:0005524">
    <property type="term" value="F:ATP binding"/>
    <property type="evidence" value="ECO:0007669"/>
    <property type="project" value="UniProtKB-UniRule"/>
</dbReference>
<dbReference type="GO" id="GO:0004417">
    <property type="term" value="F:hydroxyethylthiazole kinase activity"/>
    <property type="evidence" value="ECO:0007669"/>
    <property type="project" value="UniProtKB-UniRule"/>
</dbReference>
<dbReference type="GO" id="GO:0000287">
    <property type="term" value="F:magnesium ion binding"/>
    <property type="evidence" value="ECO:0007669"/>
    <property type="project" value="UniProtKB-UniRule"/>
</dbReference>
<dbReference type="GO" id="GO:0009228">
    <property type="term" value="P:thiamine biosynthetic process"/>
    <property type="evidence" value="ECO:0007669"/>
    <property type="project" value="UniProtKB-KW"/>
</dbReference>
<dbReference type="GO" id="GO:0009229">
    <property type="term" value="P:thiamine diphosphate biosynthetic process"/>
    <property type="evidence" value="ECO:0007669"/>
    <property type="project" value="UniProtKB-UniRule"/>
</dbReference>
<dbReference type="CDD" id="cd01170">
    <property type="entry name" value="THZ_kinase"/>
    <property type="match status" value="1"/>
</dbReference>
<dbReference type="Gene3D" id="3.40.1190.20">
    <property type="match status" value="1"/>
</dbReference>
<dbReference type="HAMAP" id="MF_00228">
    <property type="entry name" value="Thz_kinase"/>
    <property type="match status" value="1"/>
</dbReference>
<dbReference type="InterPro" id="IPR000417">
    <property type="entry name" value="Hyethyz_kinase"/>
</dbReference>
<dbReference type="InterPro" id="IPR029056">
    <property type="entry name" value="Ribokinase-like"/>
</dbReference>
<dbReference type="NCBIfam" id="NF006830">
    <property type="entry name" value="PRK09355.1"/>
    <property type="match status" value="1"/>
</dbReference>
<dbReference type="Pfam" id="PF02110">
    <property type="entry name" value="HK"/>
    <property type="match status" value="1"/>
</dbReference>
<dbReference type="PIRSF" id="PIRSF000513">
    <property type="entry name" value="Thz_kinase"/>
    <property type="match status" value="1"/>
</dbReference>
<dbReference type="PRINTS" id="PR01099">
    <property type="entry name" value="HYETHTZKNASE"/>
</dbReference>
<dbReference type="SUPFAM" id="SSF53613">
    <property type="entry name" value="Ribokinase-like"/>
    <property type="match status" value="1"/>
</dbReference>
<name>THIM_CLOAB</name>
<sequence>MLKERLENVRGTNPLIHNITNYVTVNDCANILLACGASPIMADDIGEVEEITSICRGLNINIGTLNENTIESMLKAGKMANKLKHPVILDPVGVGASKLRRQTALKLLEEVKFTVIRGNISEIKVLALGQGITKGVDADVNDKVKDDTLDNVINFAKGFSKKTGAVIAITGAIDIIANESKAYVVRNGNPNMSKITGTGCMLSAMTAAYISANVDSPLEATLASVCAMGICGELAYNRLSKRDGNSSYRNYIIDEVFNLDGDKLDDAARYESY</sequence>
<accession>Q97EL4</accession>
<reference key="1">
    <citation type="journal article" date="2001" name="J. Bacteriol.">
        <title>Genome sequence and comparative analysis of the solvent-producing bacterium Clostridium acetobutylicum.</title>
        <authorList>
            <person name="Noelling J."/>
            <person name="Breton G."/>
            <person name="Omelchenko M.V."/>
            <person name="Makarova K.S."/>
            <person name="Zeng Q."/>
            <person name="Gibson R."/>
            <person name="Lee H.M."/>
            <person name="Dubois J."/>
            <person name="Qiu D."/>
            <person name="Hitti J."/>
            <person name="Wolf Y.I."/>
            <person name="Tatusov R.L."/>
            <person name="Sabathe F."/>
            <person name="Doucette-Stamm L.A."/>
            <person name="Soucaille P."/>
            <person name="Daly M.J."/>
            <person name="Bennett G.N."/>
            <person name="Koonin E.V."/>
            <person name="Smith D.R."/>
        </authorList>
    </citation>
    <scope>NUCLEOTIDE SEQUENCE [LARGE SCALE GENOMIC DNA]</scope>
    <source>
        <strain>ATCC 824 / DSM 792 / JCM 1419 / IAM 19013 / LMG 5710 / NBRC 13948 / NRRL B-527 / VKM B-1787 / 2291 / W</strain>
    </source>
</reference>
<feature type="chain" id="PRO_0000156928" description="Hydroxyethylthiazole kinase">
    <location>
        <begin position="1"/>
        <end position="273"/>
    </location>
</feature>
<feature type="binding site" evidence="1">
    <location>
        <position position="41"/>
    </location>
    <ligand>
        <name>substrate</name>
    </ligand>
</feature>
<feature type="binding site" evidence="1">
    <location>
        <position position="117"/>
    </location>
    <ligand>
        <name>ATP</name>
        <dbReference type="ChEBI" id="CHEBI:30616"/>
    </ligand>
</feature>
<feature type="binding site" evidence="1">
    <location>
        <position position="170"/>
    </location>
    <ligand>
        <name>ATP</name>
        <dbReference type="ChEBI" id="CHEBI:30616"/>
    </ligand>
</feature>
<feature type="binding site" evidence="1">
    <location>
        <position position="197"/>
    </location>
    <ligand>
        <name>substrate</name>
    </ligand>
</feature>
<organism>
    <name type="scientific">Clostridium acetobutylicum (strain ATCC 824 / DSM 792 / JCM 1419 / IAM 19013 / LMG 5710 / NBRC 13948 / NRRL B-527 / VKM B-1787 / 2291 / W)</name>
    <dbReference type="NCBI Taxonomy" id="272562"/>
    <lineage>
        <taxon>Bacteria</taxon>
        <taxon>Bacillati</taxon>
        <taxon>Bacillota</taxon>
        <taxon>Clostridia</taxon>
        <taxon>Eubacteriales</taxon>
        <taxon>Clostridiaceae</taxon>
        <taxon>Clostridium</taxon>
    </lineage>
</organism>